<evidence type="ECO:0000255" key="1">
    <source>
        <dbReference type="HAMAP-Rule" id="MF_01400"/>
    </source>
</evidence>
<evidence type="ECO:0000255" key="2">
    <source>
        <dbReference type="PROSITE-ProRule" id="PRU01126"/>
    </source>
</evidence>
<accession>P47686</accession>
<comment type="catalytic activity">
    <reaction evidence="1">
        <text>L-methionyl-[protein] + [thioredoxin]-disulfide + H2O = L-methionyl-(R)-S-oxide-[protein] + [thioredoxin]-dithiol</text>
        <dbReference type="Rhea" id="RHEA:24164"/>
        <dbReference type="Rhea" id="RHEA-COMP:10698"/>
        <dbReference type="Rhea" id="RHEA-COMP:10700"/>
        <dbReference type="Rhea" id="RHEA-COMP:12313"/>
        <dbReference type="Rhea" id="RHEA-COMP:12314"/>
        <dbReference type="ChEBI" id="CHEBI:15377"/>
        <dbReference type="ChEBI" id="CHEBI:16044"/>
        <dbReference type="ChEBI" id="CHEBI:29950"/>
        <dbReference type="ChEBI" id="CHEBI:45764"/>
        <dbReference type="ChEBI" id="CHEBI:50058"/>
        <dbReference type="EC" id="1.8.4.12"/>
    </reaction>
</comment>
<comment type="similarity">
    <text evidence="1">Belongs to the MsrB Met sulfoxide reductase family.</text>
</comment>
<feature type="chain" id="PRO_0000140283" description="Peptide methionine sulfoxide reductase MsrB">
    <location>
        <begin position="1"/>
        <end position="150"/>
    </location>
</feature>
<feature type="domain" description="MsrB" evidence="2">
    <location>
        <begin position="9"/>
        <end position="132"/>
    </location>
</feature>
<feature type="active site" description="Nucleophile" evidence="2">
    <location>
        <position position="121"/>
    </location>
</feature>
<keyword id="KW-0560">Oxidoreductase</keyword>
<keyword id="KW-1185">Reference proteome</keyword>
<gene>
    <name evidence="1" type="primary">msrB</name>
    <name type="ordered locus">MG448</name>
</gene>
<proteinExistence type="inferred from homology"/>
<organism>
    <name type="scientific">Mycoplasma genitalium (strain ATCC 33530 / DSM 19775 / NCTC 10195 / G37)</name>
    <name type="common">Mycoplasmoides genitalium</name>
    <dbReference type="NCBI Taxonomy" id="243273"/>
    <lineage>
        <taxon>Bacteria</taxon>
        <taxon>Bacillati</taxon>
        <taxon>Mycoplasmatota</taxon>
        <taxon>Mycoplasmoidales</taxon>
        <taxon>Mycoplasmoidaceae</taxon>
        <taxon>Mycoplasmoides</taxon>
    </lineage>
</organism>
<dbReference type="EC" id="1.8.4.12" evidence="1"/>
<dbReference type="EMBL" id="L43967">
    <property type="protein sequence ID" value="AAC72468.1"/>
    <property type="molecule type" value="Genomic_DNA"/>
</dbReference>
<dbReference type="PIR" id="E64249">
    <property type="entry name" value="E64249"/>
</dbReference>
<dbReference type="RefSeq" id="WP_009885587.1">
    <property type="nucleotide sequence ID" value="NC_000908.2"/>
</dbReference>
<dbReference type="SMR" id="P47686"/>
<dbReference type="FunCoup" id="P47686">
    <property type="interactions" value="136"/>
</dbReference>
<dbReference type="STRING" id="243273.MG_448"/>
<dbReference type="GeneID" id="88282628"/>
<dbReference type="KEGG" id="mge:MG_448"/>
<dbReference type="eggNOG" id="COG0229">
    <property type="taxonomic scope" value="Bacteria"/>
</dbReference>
<dbReference type="HOGENOM" id="CLU_031040_8_5_14"/>
<dbReference type="InParanoid" id="P47686"/>
<dbReference type="OrthoDB" id="4174719at2"/>
<dbReference type="BioCyc" id="MGEN243273:G1GJ2-541-MONOMER"/>
<dbReference type="Proteomes" id="UP000000807">
    <property type="component" value="Chromosome"/>
</dbReference>
<dbReference type="GO" id="GO:0005737">
    <property type="term" value="C:cytoplasm"/>
    <property type="evidence" value="ECO:0000318"/>
    <property type="project" value="GO_Central"/>
</dbReference>
<dbReference type="GO" id="GO:0033743">
    <property type="term" value="F:peptide-methionine (R)-S-oxide reductase activity"/>
    <property type="evidence" value="ECO:0000318"/>
    <property type="project" value="GO_Central"/>
</dbReference>
<dbReference type="GO" id="GO:0030091">
    <property type="term" value="P:protein repair"/>
    <property type="evidence" value="ECO:0007669"/>
    <property type="project" value="InterPro"/>
</dbReference>
<dbReference type="GO" id="GO:0006979">
    <property type="term" value="P:response to oxidative stress"/>
    <property type="evidence" value="ECO:0007669"/>
    <property type="project" value="InterPro"/>
</dbReference>
<dbReference type="FunFam" id="2.170.150.20:FF:000003">
    <property type="entry name" value="Peptide methionine sulfoxide reductase MsrB"/>
    <property type="match status" value="1"/>
</dbReference>
<dbReference type="Gene3D" id="2.170.150.20">
    <property type="entry name" value="Peptide methionine sulfoxide reductase"/>
    <property type="match status" value="1"/>
</dbReference>
<dbReference type="HAMAP" id="MF_01400">
    <property type="entry name" value="MsrB"/>
    <property type="match status" value="1"/>
</dbReference>
<dbReference type="InterPro" id="IPR028427">
    <property type="entry name" value="Met_Sox_Rdtase_MsrB"/>
</dbReference>
<dbReference type="InterPro" id="IPR002579">
    <property type="entry name" value="Met_Sox_Rdtase_MsrB_dom"/>
</dbReference>
<dbReference type="InterPro" id="IPR011057">
    <property type="entry name" value="Mss4-like_sf"/>
</dbReference>
<dbReference type="NCBIfam" id="TIGR00357">
    <property type="entry name" value="peptide-methionine (R)-S-oxide reductase MsrB"/>
    <property type="match status" value="1"/>
</dbReference>
<dbReference type="PANTHER" id="PTHR10173">
    <property type="entry name" value="METHIONINE SULFOXIDE REDUCTASE"/>
    <property type="match status" value="1"/>
</dbReference>
<dbReference type="PANTHER" id="PTHR10173:SF59">
    <property type="entry name" value="PEPTIDE METHIONINE SULFOXIDE REDUCTASE MSRA_MSRB"/>
    <property type="match status" value="1"/>
</dbReference>
<dbReference type="Pfam" id="PF01641">
    <property type="entry name" value="SelR"/>
    <property type="match status" value="1"/>
</dbReference>
<dbReference type="SUPFAM" id="SSF51316">
    <property type="entry name" value="Mss4-like"/>
    <property type="match status" value="1"/>
</dbReference>
<dbReference type="PROSITE" id="PS51790">
    <property type="entry name" value="MSRB"/>
    <property type="match status" value="1"/>
</dbReference>
<name>MSRB_MYCGE</name>
<sequence length="150" mass="17290">MSKYQKKSEAELKRTLTKLQFDVTQNAHTEPPYINEYNRNFEKGIYVDITSGEPLFISTDKFKSGCGWPAFSKPIDKNLIANYRDESHGMIRTEVRAKNSDSHLGHVFNDGPSELGGLRYCINSAALKFIPFEEMEKLGYKDYIHLFKNK</sequence>
<protein>
    <recommendedName>
        <fullName evidence="1">Peptide methionine sulfoxide reductase MsrB</fullName>
        <ecNumber evidence="1">1.8.4.12</ecNumber>
    </recommendedName>
    <alternativeName>
        <fullName evidence="1">Peptide-methionine (R)-S-oxide reductase</fullName>
    </alternativeName>
</protein>
<reference key="1">
    <citation type="journal article" date="1995" name="Science">
        <title>The minimal gene complement of Mycoplasma genitalium.</title>
        <authorList>
            <person name="Fraser C.M."/>
            <person name="Gocayne J.D."/>
            <person name="White O."/>
            <person name="Adams M.D."/>
            <person name="Clayton R.A."/>
            <person name="Fleischmann R.D."/>
            <person name="Bult C.J."/>
            <person name="Kerlavage A.R."/>
            <person name="Sutton G.G."/>
            <person name="Kelley J.M."/>
            <person name="Fritchman J.L."/>
            <person name="Weidman J.F."/>
            <person name="Small K.V."/>
            <person name="Sandusky M."/>
            <person name="Fuhrmann J.L."/>
            <person name="Nguyen D.T."/>
            <person name="Utterback T.R."/>
            <person name="Saudek D.M."/>
            <person name="Phillips C.A."/>
            <person name="Merrick J.M."/>
            <person name="Tomb J.-F."/>
            <person name="Dougherty B.A."/>
            <person name="Bott K.F."/>
            <person name="Hu P.-C."/>
            <person name="Lucier T.S."/>
            <person name="Peterson S.N."/>
            <person name="Smith H.O."/>
            <person name="Hutchison C.A. III"/>
            <person name="Venter J.C."/>
        </authorList>
    </citation>
    <scope>NUCLEOTIDE SEQUENCE [LARGE SCALE GENOMIC DNA]</scope>
    <source>
        <strain>ATCC 33530 / DSM 19775 / NCTC 10195 / G37</strain>
    </source>
</reference>